<protein>
    <recommendedName>
        <fullName>Nodulin-1</fullName>
        <shortName>MtN1</shortName>
    </recommendedName>
</protein>
<reference key="1">
    <citation type="journal article" date="1998" name="Mol. Plant Microbe Interact.">
        <title>Symbiosis-specific expression of two Medicago truncatula nodulin genes, MtN1 and MtN13, encoding products homologous to plant defense proteins.</title>
        <authorList>
            <person name="Gamas P."/>
            <person name="de Billy F."/>
            <person name="Truchet G."/>
        </authorList>
    </citation>
    <scope>NUCLEOTIDE SEQUENCE [MRNA]</scope>
    <scope>TISSUE SPECIFICITY</scope>
    <source>
        <strain>cv. Jemalong J5</strain>
    </source>
</reference>
<reference key="2">
    <citation type="journal article" date="1996" name="Mol. Plant Microbe Interact.">
        <title>Use of a subtractive hybridization approach to identify new Medicago truncatula genes induced during root nodule development.</title>
        <authorList>
            <person name="Gamas P."/>
            <person name="de Carvalho Niebel F."/>
            <person name="Lescure N."/>
            <person name="Cullimore J."/>
        </authorList>
    </citation>
    <scope>INDUCTION</scope>
    <source>
        <strain>cv. Jemalong J5</strain>
    </source>
</reference>
<sequence>MERKTLASLCFFLIVLLAAQVVAQIVPCKTRNRNFKSACIAVSGDNEECDHDCRRVGGWYGGSCKNQKCVCDC</sequence>
<gene>
    <name type="primary">N1</name>
</gene>
<dbReference type="EMBL" id="Y10456">
    <property type="protein sequence ID" value="CAA71482.1"/>
    <property type="molecule type" value="mRNA"/>
</dbReference>
<dbReference type="SMR" id="P93331"/>
<dbReference type="ExpressionAtlas" id="P93331">
    <property type="expression patterns" value="differential"/>
</dbReference>
<dbReference type="GO" id="GO:0005576">
    <property type="term" value="C:extracellular region"/>
    <property type="evidence" value="ECO:0007669"/>
    <property type="project" value="UniProtKB-SubCell"/>
</dbReference>
<dbReference type="GO" id="GO:0006952">
    <property type="term" value="P:defense response"/>
    <property type="evidence" value="ECO:0007669"/>
    <property type="project" value="InterPro"/>
</dbReference>
<dbReference type="GO" id="GO:0009877">
    <property type="term" value="P:nodulation"/>
    <property type="evidence" value="ECO:0007669"/>
    <property type="project" value="UniProtKB-KW"/>
</dbReference>
<dbReference type="InterPro" id="IPR003614">
    <property type="entry name" value="Scorpion_toxin-like"/>
</dbReference>
<dbReference type="SMART" id="SM00505">
    <property type="entry name" value="Knot1"/>
    <property type="match status" value="1"/>
</dbReference>
<evidence type="ECO:0000250" key="1"/>
<evidence type="ECO:0000255" key="2"/>
<evidence type="ECO:0000269" key="3">
    <source>
    </source>
</evidence>
<evidence type="ECO:0000269" key="4">
    <source>
    </source>
</evidence>
<evidence type="ECO:0000305" key="5"/>
<comment type="function">
    <text>Nodulation-related protein probably involved in the infection process.</text>
</comment>
<comment type="subcellular location">
    <subcellularLocation>
        <location evidence="5">Secreted</location>
    </subcellularLocation>
</comment>
<comment type="tissue specificity">
    <text evidence="4">Expressed in nodules, but not in leaves, stems, flowers and roots. In developing nodules, expressed close to the infection threads.</text>
</comment>
<comment type="induction">
    <text evidence="3">Up-regulated during nodulation, but not by Nod factors or pathogen infection.</text>
</comment>
<organism>
    <name type="scientific">Medicago truncatula</name>
    <name type="common">Barrel medic</name>
    <name type="synonym">Medicago tribuloides</name>
    <dbReference type="NCBI Taxonomy" id="3880"/>
    <lineage>
        <taxon>Eukaryota</taxon>
        <taxon>Viridiplantae</taxon>
        <taxon>Streptophyta</taxon>
        <taxon>Embryophyta</taxon>
        <taxon>Tracheophyta</taxon>
        <taxon>Spermatophyta</taxon>
        <taxon>Magnoliopsida</taxon>
        <taxon>eudicotyledons</taxon>
        <taxon>Gunneridae</taxon>
        <taxon>Pentapetalae</taxon>
        <taxon>rosids</taxon>
        <taxon>fabids</taxon>
        <taxon>Fabales</taxon>
        <taxon>Fabaceae</taxon>
        <taxon>Papilionoideae</taxon>
        <taxon>50 kb inversion clade</taxon>
        <taxon>NPAAA clade</taxon>
        <taxon>Hologalegina</taxon>
        <taxon>IRL clade</taxon>
        <taxon>Trifolieae</taxon>
        <taxon>Medicago</taxon>
    </lineage>
</organism>
<name>NOD1_MEDTR</name>
<accession>P93331</accession>
<proteinExistence type="evidence at transcript level"/>
<keyword id="KW-1015">Disulfide bond</keyword>
<keyword id="KW-0960">Knottin</keyword>
<keyword id="KW-0536">Nodulation</keyword>
<keyword id="KW-0964">Secreted</keyword>
<keyword id="KW-0732">Signal</keyword>
<feature type="signal peptide" evidence="2">
    <location>
        <begin position="1"/>
        <end position="23"/>
    </location>
</feature>
<feature type="chain" id="PRO_5000147016" description="Nodulin-1">
    <location>
        <begin position="24"/>
        <end position="73"/>
    </location>
</feature>
<feature type="disulfide bond" evidence="1">
    <location>
        <begin position="39"/>
        <end position="64"/>
    </location>
</feature>
<feature type="disulfide bond" evidence="1">
    <location>
        <begin position="49"/>
        <end position="71"/>
    </location>
</feature>
<feature type="disulfide bond" evidence="1">
    <location>
        <begin position="53"/>
        <end position="73"/>
    </location>
</feature>